<gene>
    <name evidence="1" type="primary">greA</name>
    <name type="ordered locus">MSMEG_5263</name>
    <name type="ordered locus">MSMEI_5125</name>
</gene>
<sequence length="164" mass="18005">MTDTQVTWLTQEAFDRLKAELDQLIANRPVIAAEINDRREEGDLRENGGYHAAREEQGQQEARIRQLQELLNNAKVGEAPKQSGVALPGSVVKVYYDDDENDTETFLIATRQEGISDGKLEVYSPNSPLGGALLDAKVGESRTYTVPSGNVVKVTLVSAEPYQG</sequence>
<reference key="1">
    <citation type="submission" date="2006-10" db="EMBL/GenBank/DDBJ databases">
        <authorList>
            <person name="Fleischmann R.D."/>
            <person name="Dodson R.J."/>
            <person name="Haft D.H."/>
            <person name="Merkel J.S."/>
            <person name="Nelson W.C."/>
            <person name="Fraser C.M."/>
        </authorList>
    </citation>
    <scope>NUCLEOTIDE SEQUENCE [LARGE SCALE GENOMIC DNA]</scope>
    <source>
        <strain>ATCC 700084 / mc(2)155</strain>
    </source>
</reference>
<reference key="2">
    <citation type="journal article" date="2007" name="Genome Biol.">
        <title>Interrupted coding sequences in Mycobacterium smegmatis: authentic mutations or sequencing errors?</title>
        <authorList>
            <person name="Deshayes C."/>
            <person name="Perrodou E."/>
            <person name="Gallien S."/>
            <person name="Euphrasie D."/>
            <person name="Schaeffer C."/>
            <person name="Van-Dorsselaer A."/>
            <person name="Poch O."/>
            <person name="Lecompte O."/>
            <person name="Reyrat J.-M."/>
        </authorList>
    </citation>
    <scope>NUCLEOTIDE SEQUENCE [LARGE SCALE GENOMIC DNA]</scope>
    <source>
        <strain>ATCC 700084 / mc(2)155</strain>
    </source>
</reference>
<reference key="3">
    <citation type="journal article" date="2009" name="Genome Res.">
        <title>Ortho-proteogenomics: multiple proteomes investigation through orthology and a new MS-based protocol.</title>
        <authorList>
            <person name="Gallien S."/>
            <person name="Perrodou E."/>
            <person name="Carapito C."/>
            <person name="Deshayes C."/>
            <person name="Reyrat J.-M."/>
            <person name="Van Dorsselaer A."/>
            <person name="Poch O."/>
            <person name="Schaeffer C."/>
            <person name="Lecompte O."/>
        </authorList>
    </citation>
    <scope>NUCLEOTIDE SEQUENCE [LARGE SCALE GENOMIC DNA]</scope>
    <scope>IDENTIFICATION BY MASS SPECTROMETRY [LARGE SCALE ANALYSIS]</scope>
    <scope>CLEAVAGE OF INITIATOR METHIONINE</scope>
    <source>
        <strain>ATCC 700084 / mc(2)155</strain>
    </source>
</reference>
<name>GREA_MYCS2</name>
<feature type="initiator methionine" description="Removed" evidence="2">
    <location>
        <position position="1"/>
    </location>
</feature>
<feature type="chain" id="PRO_1000034281" description="Transcription elongation factor GreA">
    <location>
        <begin position="2"/>
        <end position="164"/>
    </location>
</feature>
<feature type="coiled-coil region" evidence="1">
    <location>
        <begin position="50"/>
        <end position="76"/>
    </location>
</feature>
<dbReference type="EMBL" id="CP000480">
    <property type="protein sequence ID" value="ABK71387.1"/>
    <property type="molecule type" value="Genomic_DNA"/>
</dbReference>
<dbReference type="EMBL" id="CP001663">
    <property type="protein sequence ID" value="AFP41569.1"/>
    <property type="molecule type" value="Genomic_DNA"/>
</dbReference>
<dbReference type="RefSeq" id="WP_003896664.1">
    <property type="nucleotide sequence ID" value="NZ_SIJM01000014.1"/>
</dbReference>
<dbReference type="RefSeq" id="YP_889509.1">
    <property type="nucleotide sequence ID" value="NC_008596.1"/>
</dbReference>
<dbReference type="SMR" id="A0R2X1"/>
<dbReference type="STRING" id="246196.MSMEG_5263"/>
<dbReference type="PaxDb" id="246196-MSMEI_5125"/>
<dbReference type="GeneID" id="93459922"/>
<dbReference type="KEGG" id="msb:LJ00_26030"/>
<dbReference type="KEGG" id="msg:MSMEI_5125"/>
<dbReference type="KEGG" id="msm:MSMEG_5263"/>
<dbReference type="PATRIC" id="fig|246196.19.peg.5134"/>
<dbReference type="eggNOG" id="COG0782">
    <property type="taxonomic scope" value="Bacteria"/>
</dbReference>
<dbReference type="OrthoDB" id="9797227at2"/>
<dbReference type="Proteomes" id="UP000000757">
    <property type="component" value="Chromosome"/>
</dbReference>
<dbReference type="Proteomes" id="UP000006158">
    <property type="component" value="Chromosome"/>
</dbReference>
<dbReference type="GO" id="GO:0003677">
    <property type="term" value="F:DNA binding"/>
    <property type="evidence" value="ECO:0007669"/>
    <property type="project" value="UniProtKB-UniRule"/>
</dbReference>
<dbReference type="GO" id="GO:0070063">
    <property type="term" value="F:RNA polymerase binding"/>
    <property type="evidence" value="ECO:0007669"/>
    <property type="project" value="InterPro"/>
</dbReference>
<dbReference type="GO" id="GO:0006354">
    <property type="term" value="P:DNA-templated transcription elongation"/>
    <property type="evidence" value="ECO:0007669"/>
    <property type="project" value="TreeGrafter"/>
</dbReference>
<dbReference type="GO" id="GO:0032784">
    <property type="term" value="P:regulation of DNA-templated transcription elongation"/>
    <property type="evidence" value="ECO:0007669"/>
    <property type="project" value="UniProtKB-UniRule"/>
</dbReference>
<dbReference type="FunFam" id="1.10.287.180:FF:000001">
    <property type="entry name" value="Transcription elongation factor GreA"/>
    <property type="match status" value="1"/>
</dbReference>
<dbReference type="Gene3D" id="3.10.50.30">
    <property type="entry name" value="Transcription elongation factor, GreA/GreB, C-terminal domain"/>
    <property type="match status" value="1"/>
</dbReference>
<dbReference type="Gene3D" id="1.10.287.180">
    <property type="entry name" value="Transcription elongation factor, GreA/GreB, N-terminal domain"/>
    <property type="match status" value="1"/>
</dbReference>
<dbReference type="HAMAP" id="MF_00105">
    <property type="entry name" value="GreA_GreB"/>
    <property type="match status" value="1"/>
</dbReference>
<dbReference type="InterPro" id="IPR036953">
    <property type="entry name" value="GreA/GreB_C_sf"/>
</dbReference>
<dbReference type="InterPro" id="IPR018151">
    <property type="entry name" value="TF_GreA/GreB_CS"/>
</dbReference>
<dbReference type="InterPro" id="IPR006359">
    <property type="entry name" value="Tscrpt_elong_fac_GreA"/>
</dbReference>
<dbReference type="InterPro" id="IPR028624">
    <property type="entry name" value="Tscrpt_elong_fac_GreA/B"/>
</dbReference>
<dbReference type="InterPro" id="IPR001437">
    <property type="entry name" value="Tscrpt_elong_fac_GreA/B_C"/>
</dbReference>
<dbReference type="InterPro" id="IPR023459">
    <property type="entry name" value="Tscrpt_elong_fac_GreA/B_fam"/>
</dbReference>
<dbReference type="InterPro" id="IPR022691">
    <property type="entry name" value="Tscrpt_elong_fac_GreA/B_N"/>
</dbReference>
<dbReference type="InterPro" id="IPR036805">
    <property type="entry name" value="Tscrpt_elong_fac_GreA/B_N_sf"/>
</dbReference>
<dbReference type="NCBIfam" id="TIGR01462">
    <property type="entry name" value="greA"/>
    <property type="match status" value="1"/>
</dbReference>
<dbReference type="NCBIfam" id="NF001262">
    <property type="entry name" value="PRK00226.1-3"/>
    <property type="match status" value="1"/>
</dbReference>
<dbReference type="PANTHER" id="PTHR30437">
    <property type="entry name" value="TRANSCRIPTION ELONGATION FACTOR GREA"/>
    <property type="match status" value="1"/>
</dbReference>
<dbReference type="PANTHER" id="PTHR30437:SF4">
    <property type="entry name" value="TRANSCRIPTION ELONGATION FACTOR GREA"/>
    <property type="match status" value="1"/>
</dbReference>
<dbReference type="Pfam" id="PF01272">
    <property type="entry name" value="GreA_GreB"/>
    <property type="match status" value="1"/>
</dbReference>
<dbReference type="Pfam" id="PF03449">
    <property type="entry name" value="GreA_GreB_N"/>
    <property type="match status" value="1"/>
</dbReference>
<dbReference type="PIRSF" id="PIRSF006092">
    <property type="entry name" value="GreA_GreB"/>
    <property type="match status" value="1"/>
</dbReference>
<dbReference type="SUPFAM" id="SSF54534">
    <property type="entry name" value="FKBP-like"/>
    <property type="match status" value="1"/>
</dbReference>
<dbReference type="SUPFAM" id="SSF46557">
    <property type="entry name" value="GreA transcript cleavage protein, N-terminal domain"/>
    <property type="match status" value="1"/>
</dbReference>
<dbReference type="PROSITE" id="PS00829">
    <property type="entry name" value="GREAB_1"/>
    <property type="match status" value="1"/>
</dbReference>
<dbReference type="PROSITE" id="PS00830">
    <property type="entry name" value="GREAB_2"/>
    <property type="match status" value="1"/>
</dbReference>
<keyword id="KW-0175">Coiled coil</keyword>
<keyword id="KW-0238">DNA-binding</keyword>
<keyword id="KW-1185">Reference proteome</keyword>
<keyword id="KW-0804">Transcription</keyword>
<keyword id="KW-0805">Transcription regulation</keyword>
<organism>
    <name type="scientific">Mycolicibacterium smegmatis (strain ATCC 700084 / mc(2)155)</name>
    <name type="common">Mycobacterium smegmatis</name>
    <dbReference type="NCBI Taxonomy" id="246196"/>
    <lineage>
        <taxon>Bacteria</taxon>
        <taxon>Bacillati</taxon>
        <taxon>Actinomycetota</taxon>
        <taxon>Actinomycetes</taxon>
        <taxon>Mycobacteriales</taxon>
        <taxon>Mycobacteriaceae</taxon>
        <taxon>Mycolicibacterium</taxon>
    </lineage>
</organism>
<comment type="function">
    <text evidence="1">Necessary for efficient RNA polymerase transcription elongation past template-encoded arresting sites. The arresting sites in DNA have the property of trapping a certain fraction of elongating RNA polymerases that pass through, resulting in locked ternary complexes. Cleavage of the nascent transcript by cleavage factors such as GreA or GreB allows the resumption of elongation from the new 3'terminus. GreA releases sequences of 2 to 3 nucleotides.</text>
</comment>
<comment type="similarity">
    <text evidence="1">Belongs to the GreA/GreB family.</text>
</comment>
<protein>
    <recommendedName>
        <fullName evidence="1">Transcription elongation factor GreA</fullName>
    </recommendedName>
    <alternativeName>
        <fullName evidence="1">Transcript cleavage factor GreA</fullName>
    </alternativeName>
</protein>
<proteinExistence type="evidence at protein level"/>
<accession>A0R2X1</accession>
<accession>I7GF24</accession>
<evidence type="ECO:0000255" key="1">
    <source>
        <dbReference type="HAMAP-Rule" id="MF_00105"/>
    </source>
</evidence>
<evidence type="ECO:0000269" key="2">
    <source>
    </source>
</evidence>